<evidence type="ECO:0000255" key="1">
    <source>
        <dbReference type="HAMAP-Rule" id="MF_01554"/>
    </source>
</evidence>
<name>GLMM_SALAI</name>
<organism>
    <name type="scientific">Salinispora arenicola (strain CNS-205)</name>
    <dbReference type="NCBI Taxonomy" id="391037"/>
    <lineage>
        <taxon>Bacteria</taxon>
        <taxon>Bacillati</taxon>
        <taxon>Actinomycetota</taxon>
        <taxon>Actinomycetes</taxon>
        <taxon>Micromonosporales</taxon>
        <taxon>Micromonosporaceae</taxon>
        <taxon>Salinispora</taxon>
    </lineage>
</organism>
<sequence>MGRLFGTDGVRGRANADLTPELALAVAVAAAHTLAEADRSHPPLAVVGRDTRASGEMLEAAVVAGLTSAGANVVRVGVLPTPAVAFLTAEAKADFGVMLSASHNPMPDNGIKLFAAGGHKLPDEIEMKIEAAIEANATTAWERPVGAGVGRVHDLLDGADHYVQHLVGTVPHRLDGIKVVVDCANGAAAEVAPAAYREAGAEVVEIHAKPDGLNINDECGSNHLAALQQAVVEHGAQLGIAHDGDADRCVAVSADGDEVDGDQVMAILALAMRQAGTLTADTLVATVMSNLGLRIAMSREGIRLVETKVGDRYVLEELRASGLALGGEQSGHIVMPAHATTGDGVLTGLHLMSRLAATGKSLAELAAVVTPLPQVLINVPVGDRTVGAVAPAVRAEVERAEVELGDAGRVLLRPSGTEPLVRVMVEASTETLARQVAERIADQVRTASPVG</sequence>
<gene>
    <name evidence="1" type="primary">glmM</name>
    <name type="ordered locus">Sare_4252</name>
</gene>
<protein>
    <recommendedName>
        <fullName evidence="1">Phosphoglucosamine mutase</fullName>
        <ecNumber evidence="1">5.4.2.10</ecNumber>
    </recommendedName>
</protein>
<dbReference type="EC" id="5.4.2.10" evidence="1"/>
<dbReference type="EMBL" id="CP000850">
    <property type="protein sequence ID" value="ABW00034.1"/>
    <property type="molecule type" value="Genomic_DNA"/>
</dbReference>
<dbReference type="SMR" id="A8M4B8"/>
<dbReference type="STRING" id="391037.Sare_4252"/>
<dbReference type="KEGG" id="saq:Sare_4252"/>
<dbReference type="PATRIC" id="fig|391037.6.peg.4292"/>
<dbReference type="eggNOG" id="COG1109">
    <property type="taxonomic scope" value="Bacteria"/>
</dbReference>
<dbReference type="HOGENOM" id="CLU_016950_7_0_11"/>
<dbReference type="OrthoDB" id="9803322at2"/>
<dbReference type="GO" id="GO:0005829">
    <property type="term" value="C:cytosol"/>
    <property type="evidence" value="ECO:0007669"/>
    <property type="project" value="TreeGrafter"/>
</dbReference>
<dbReference type="GO" id="GO:0000287">
    <property type="term" value="F:magnesium ion binding"/>
    <property type="evidence" value="ECO:0007669"/>
    <property type="project" value="UniProtKB-UniRule"/>
</dbReference>
<dbReference type="GO" id="GO:0008966">
    <property type="term" value="F:phosphoglucosamine mutase activity"/>
    <property type="evidence" value="ECO:0007669"/>
    <property type="project" value="UniProtKB-UniRule"/>
</dbReference>
<dbReference type="GO" id="GO:0004615">
    <property type="term" value="F:phosphomannomutase activity"/>
    <property type="evidence" value="ECO:0007669"/>
    <property type="project" value="TreeGrafter"/>
</dbReference>
<dbReference type="GO" id="GO:0005975">
    <property type="term" value="P:carbohydrate metabolic process"/>
    <property type="evidence" value="ECO:0007669"/>
    <property type="project" value="InterPro"/>
</dbReference>
<dbReference type="GO" id="GO:0009252">
    <property type="term" value="P:peptidoglycan biosynthetic process"/>
    <property type="evidence" value="ECO:0007669"/>
    <property type="project" value="TreeGrafter"/>
</dbReference>
<dbReference type="GO" id="GO:0006048">
    <property type="term" value="P:UDP-N-acetylglucosamine biosynthetic process"/>
    <property type="evidence" value="ECO:0007669"/>
    <property type="project" value="TreeGrafter"/>
</dbReference>
<dbReference type="CDD" id="cd05802">
    <property type="entry name" value="GlmM"/>
    <property type="match status" value="1"/>
</dbReference>
<dbReference type="FunFam" id="3.30.310.50:FF:000001">
    <property type="entry name" value="Phosphoglucosamine mutase"/>
    <property type="match status" value="1"/>
</dbReference>
<dbReference type="FunFam" id="3.40.120.10:FF:000001">
    <property type="entry name" value="Phosphoglucosamine mutase"/>
    <property type="match status" value="1"/>
</dbReference>
<dbReference type="FunFam" id="3.40.120.10:FF:000002">
    <property type="entry name" value="Phosphoglucosamine mutase"/>
    <property type="match status" value="1"/>
</dbReference>
<dbReference type="Gene3D" id="3.40.120.10">
    <property type="entry name" value="Alpha-D-Glucose-1,6-Bisphosphate, subunit A, domain 3"/>
    <property type="match status" value="3"/>
</dbReference>
<dbReference type="Gene3D" id="3.30.310.50">
    <property type="entry name" value="Alpha-D-phosphohexomutase, C-terminal domain"/>
    <property type="match status" value="1"/>
</dbReference>
<dbReference type="HAMAP" id="MF_01554_B">
    <property type="entry name" value="GlmM_B"/>
    <property type="match status" value="1"/>
</dbReference>
<dbReference type="InterPro" id="IPR005844">
    <property type="entry name" value="A-D-PHexomutase_a/b/a-I"/>
</dbReference>
<dbReference type="InterPro" id="IPR016055">
    <property type="entry name" value="A-D-PHexomutase_a/b/a-I/II/III"/>
</dbReference>
<dbReference type="InterPro" id="IPR005845">
    <property type="entry name" value="A-D-PHexomutase_a/b/a-II"/>
</dbReference>
<dbReference type="InterPro" id="IPR005846">
    <property type="entry name" value="A-D-PHexomutase_a/b/a-III"/>
</dbReference>
<dbReference type="InterPro" id="IPR005843">
    <property type="entry name" value="A-D-PHexomutase_C"/>
</dbReference>
<dbReference type="InterPro" id="IPR036900">
    <property type="entry name" value="A-D-PHexomutase_C_sf"/>
</dbReference>
<dbReference type="InterPro" id="IPR016066">
    <property type="entry name" value="A-D-PHexomutase_CS"/>
</dbReference>
<dbReference type="InterPro" id="IPR005841">
    <property type="entry name" value="Alpha-D-phosphohexomutase_SF"/>
</dbReference>
<dbReference type="InterPro" id="IPR006352">
    <property type="entry name" value="GlmM_bact"/>
</dbReference>
<dbReference type="InterPro" id="IPR050060">
    <property type="entry name" value="Phosphoglucosamine_mutase"/>
</dbReference>
<dbReference type="NCBIfam" id="TIGR01455">
    <property type="entry name" value="glmM"/>
    <property type="match status" value="1"/>
</dbReference>
<dbReference type="PANTHER" id="PTHR42946:SF1">
    <property type="entry name" value="PHOSPHOGLUCOMUTASE (ALPHA-D-GLUCOSE-1,6-BISPHOSPHATE-DEPENDENT)"/>
    <property type="match status" value="1"/>
</dbReference>
<dbReference type="PANTHER" id="PTHR42946">
    <property type="entry name" value="PHOSPHOHEXOSE MUTASE"/>
    <property type="match status" value="1"/>
</dbReference>
<dbReference type="Pfam" id="PF02878">
    <property type="entry name" value="PGM_PMM_I"/>
    <property type="match status" value="1"/>
</dbReference>
<dbReference type="Pfam" id="PF02879">
    <property type="entry name" value="PGM_PMM_II"/>
    <property type="match status" value="1"/>
</dbReference>
<dbReference type="Pfam" id="PF02880">
    <property type="entry name" value="PGM_PMM_III"/>
    <property type="match status" value="1"/>
</dbReference>
<dbReference type="Pfam" id="PF00408">
    <property type="entry name" value="PGM_PMM_IV"/>
    <property type="match status" value="1"/>
</dbReference>
<dbReference type="PRINTS" id="PR00509">
    <property type="entry name" value="PGMPMM"/>
</dbReference>
<dbReference type="SUPFAM" id="SSF55957">
    <property type="entry name" value="Phosphoglucomutase, C-terminal domain"/>
    <property type="match status" value="1"/>
</dbReference>
<dbReference type="SUPFAM" id="SSF53738">
    <property type="entry name" value="Phosphoglucomutase, first 3 domains"/>
    <property type="match status" value="3"/>
</dbReference>
<dbReference type="PROSITE" id="PS00710">
    <property type="entry name" value="PGM_PMM"/>
    <property type="match status" value="1"/>
</dbReference>
<accession>A8M4B8</accession>
<feature type="chain" id="PRO_0000343595" description="Phosphoglucosamine mutase">
    <location>
        <begin position="1"/>
        <end position="451"/>
    </location>
</feature>
<feature type="active site" description="Phosphoserine intermediate" evidence="1">
    <location>
        <position position="102"/>
    </location>
</feature>
<feature type="binding site" description="via phosphate group" evidence="1">
    <location>
        <position position="102"/>
    </location>
    <ligand>
        <name>Mg(2+)</name>
        <dbReference type="ChEBI" id="CHEBI:18420"/>
    </ligand>
</feature>
<feature type="binding site" evidence="1">
    <location>
        <position position="243"/>
    </location>
    <ligand>
        <name>Mg(2+)</name>
        <dbReference type="ChEBI" id="CHEBI:18420"/>
    </ligand>
</feature>
<feature type="binding site" evidence="1">
    <location>
        <position position="245"/>
    </location>
    <ligand>
        <name>Mg(2+)</name>
        <dbReference type="ChEBI" id="CHEBI:18420"/>
    </ligand>
</feature>
<feature type="binding site" evidence="1">
    <location>
        <position position="247"/>
    </location>
    <ligand>
        <name>Mg(2+)</name>
        <dbReference type="ChEBI" id="CHEBI:18420"/>
    </ligand>
</feature>
<feature type="modified residue" description="Phosphoserine" evidence="1">
    <location>
        <position position="102"/>
    </location>
</feature>
<keyword id="KW-0413">Isomerase</keyword>
<keyword id="KW-0460">Magnesium</keyword>
<keyword id="KW-0479">Metal-binding</keyword>
<keyword id="KW-0597">Phosphoprotein</keyword>
<comment type="function">
    <text evidence="1">Catalyzes the conversion of glucosamine-6-phosphate to glucosamine-1-phosphate.</text>
</comment>
<comment type="catalytic activity">
    <reaction evidence="1">
        <text>alpha-D-glucosamine 1-phosphate = D-glucosamine 6-phosphate</text>
        <dbReference type="Rhea" id="RHEA:23424"/>
        <dbReference type="ChEBI" id="CHEBI:58516"/>
        <dbReference type="ChEBI" id="CHEBI:58725"/>
        <dbReference type="EC" id="5.4.2.10"/>
    </reaction>
</comment>
<comment type="cofactor">
    <cofactor evidence="1">
        <name>Mg(2+)</name>
        <dbReference type="ChEBI" id="CHEBI:18420"/>
    </cofactor>
    <text evidence="1">Binds 1 Mg(2+) ion per subunit.</text>
</comment>
<comment type="PTM">
    <text evidence="1">Activated by phosphorylation.</text>
</comment>
<comment type="similarity">
    <text evidence="1">Belongs to the phosphohexose mutase family.</text>
</comment>
<reference key="1">
    <citation type="submission" date="2007-10" db="EMBL/GenBank/DDBJ databases">
        <title>Complete sequence of Salinispora arenicola CNS-205.</title>
        <authorList>
            <consortium name="US DOE Joint Genome Institute"/>
            <person name="Copeland A."/>
            <person name="Lucas S."/>
            <person name="Lapidus A."/>
            <person name="Barry K."/>
            <person name="Glavina del Rio T."/>
            <person name="Dalin E."/>
            <person name="Tice H."/>
            <person name="Pitluck S."/>
            <person name="Foster B."/>
            <person name="Schmutz J."/>
            <person name="Larimer F."/>
            <person name="Land M."/>
            <person name="Hauser L."/>
            <person name="Kyrpides N."/>
            <person name="Ivanova N."/>
            <person name="Jensen P.R."/>
            <person name="Moore B.S."/>
            <person name="Penn K."/>
            <person name="Jenkins C."/>
            <person name="Udwary D."/>
            <person name="Xiang L."/>
            <person name="Gontang E."/>
            <person name="Richardson P."/>
        </authorList>
    </citation>
    <scope>NUCLEOTIDE SEQUENCE [LARGE SCALE GENOMIC DNA]</scope>
    <source>
        <strain>CNS-205</strain>
    </source>
</reference>
<proteinExistence type="inferred from homology"/>